<sequence length="440" mass="46929">MFLAQEIIRKKRDGHALSDEEIRFFINGIRDNTVSEGQIAALAMTIFFHDMTMPERVSLTMAMRDSGTVLDWKSLNLNGPVVDKHSTGGVGDVTSLMLGPMVAACGGYIPMISGRGLGHTGGTLDKLEAIPGFDIFPDDNRFRDIIKNVGVAIIGQTNSLAPADKRFYATRDITATVDSIPLITASILAKKLAEGLDALVMDVKVGSGAFMPTYALSEELAQAIVGVANGAGVRTTALLTDMNEVLASSAGNAVEVREAVRFLTGDYRNPRLLEVTMALCVEMLLSGGLAKDETEARAKLQQVLDNGQAAEIFGRMVAAQSGPADFVDNYERYLPAATLSKAVYADRSGFVTQMDTRALGMAVVAMGGGRRQASDSIDYSVGLTDMARLGEQVDGERPLAIIHAKSEASWQEAAAAVKAAINVDDTAAKTSPVVYRRISE</sequence>
<name>TYPH_CROS8</name>
<dbReference type="EC" id="2.4.2.4" evidence="1"/>
<dbReference type="EMBL" id="CP000783">
    <property type="protein sequence ID" value="ABU78590.1"/>
    <property type="molecule type" value="Genomic_DNA"/>
</dbReference>
<dbReference type="RefSeq" id="WP_012125837.1">
    <property type="nucleotide sequence ID" value="NC_009778.1"/>
</dbReference>
<dbReference type="SMR" id="A7MGA9"/>
<dbReference type="KEGG" id="esa:ESA_03369"/>
<dbReference type="PATRIC" id="fig|290339.8.peg.2993"/>
<dbReference type="HOGENOM" id="CLU_025040_0_1_6"/>
<dbReference type="UniPathway" id="UPA00578">
    <property type="reaction ID" value="UER00638"/>
</dbReference>
<dbReference type="Proteomes" id="UP000000260">
    <property type="component" value="Chromosome"/>
</dbReference>
<dbReference type="GO" id="GO:0005829">
    <property type="term" value="C:cytosol"/>
    <property type="evidence" value="ECO:0007669"/>
    <property type="project" value="TreeGrafter"/>
</dbReference>
<dbReference type="GO" id="GO:0004645">
    <property type="term" value="F:1,4-alpha-oligoglucan phosphorylase activity"/>
    <property type="evidence" value="ECO:0007669"/>
    <property type="project" value="InterPro"/>
</dbReference>
<dbReference type="GO" id="GO:0009032">
    <property type="term" value="F:thymidine phosphorylase activity"/>
    <property type="evidence" value="ECO:0007669"/>
    <property type="project" value="UniProtKB-UniRule"/>
</dbReference>
<dbReference type="GO" id="GO:0006206">
    <property type="term" value="P:pyrimidine nucleobase metabolic process"/>
    <property type="evidence" value="ECO:0007669"/>
    <property type="project" value="InterPro"/>
</dbReference>
<dbReference type="GO" id="GO:0046104">
    <property type="term" value="P:thymidine metabolic process"/>
    <property type="evidence" value="ECO:0007669"/>
    <property type="project" value="UniProtKB-UniRule"/>
</dbReference>
<dbReference type="FunFam" id="3.40.1030.10:FF:000001">
    <property type="entry name" value="Thymidine phosphorylase"/>
    <property type="match status" value="1"/>
</dbReference>
<dbReference type="FunFam" id="3.90.1170.30:FF:000001">
    <property type="entry name" value="Thymidine phosphorylase"/>
    <property type="match status" value="1"/>
</dbReference>
<dbReference type="Gene3D" id="3.40.1030.10">
    <property type="entry name" value="Nucleoside phosphorylase/phosphoribosyltransferase catalytic domain"/>
    <property type="match status" value="1"/>
</dbReference>
<dbReference type="Gene3D" id="3.90.1170.30">
    <property type="entry name" value="Pyrimidine nucleoside phosphorylase-like, C-terminal domain"/>
    <property type="match status" value="1"/>
</dbReference>
<dbReference type="Gene3D" id="1.20.970.10">
    <property type="entry name" value="Transferase, Pyrimidine Nucleoside Phosphorylase, Chain C"/>
    <property type="match status" value="1"/>
</dbReference>
<dbReference type="HAMAP" id="MF_01628">
    <property type="entry name" value="Thymid_phosp"/>
    <property type="match status" value="1"/>
</dbReference>
<dbReference type="InterPro" id="IPR000312">
    <property type="entry name" value="Glycosyl_Trfase_fam3"/>
</dbReference>
<dbReference type="InterPro" id="IPR017459">
    <property type="entry name" value="Glycosyl_Trfase_fam3_N_dom"/>
</dbReference>
<dbReference type="InterPro" id="IPR036320">
    <property type="entry name" value="Glycosyl_Trfase_fam3_N_dom_sf"/>
</dbReference>
<dbReference type="InterPro" id="IPR035902">
    <property type="entry name" value="Nuc_phospho_transferase"/>
</dbReference>
<dbReference type="InterPro" id="IPR036566">
    <property type="entry name" value="PYNP-like_C_sf"/>
</dbReference>
<dbReference type="InterPro" id="IPR013102">
    <property type="entry name" value="PYNP_C"/>
</dbReference>
<dbReference type="InterPro" id="IPR018090">
    <property type="entry name" value="Pyrmidine_PPas_bac/euk"/>
</dbReference>
<dbReference type="InterPro" id="IPR017872">
    <property type="entry name" value="Pyrmidine_PPase_CS"/>
</dbReference>
<dbReference type="InterPro" id="IPR000053">
    <property type="entry name" value="Thymidine/pyrmidine_PPase"/>
</dbReference>
<dbReference type="InterPro" id="IPR013465">
    <property type="entry name" value="Thymidine_Pase"/>
</dbReference>
<dbReference type="NCBIfam" id="NF004490">
    <property type="entry name" value="PRK05820.1"/>
    <property type="match status" value="1"/>
</dbReference>
<dbReference type="NCBIfam" id="TIGR02643">
    <property type="entry name" value="T_phosphoryl"/>
    <property type="match status" value="1"/>
</dbReference>
<dbReference type="NCBIfam" id="TIGR02644">
    <property type="entry name" value="Y_phosphoryl"/>
    <property type="match status" value="1"/>
</dbReference>
<dbReference type="PANTHER" id="PTHR10515">
    <property type="entry name" value="THYMIDINE PHOSPHORYLASE"/>
    <property type="match status" value="1"/>
</dbReference>
<dbReference type="PANTHER" id="PTHR10515:SF0">
    <property type="entry name" value="THYMIDINE PHOSPHORYLASE"/>
    <property type="match status" value="1"/>
</dbReference>
<dbReference type="Pfam" id="PF02885">
    <property type="entry name" value="Glycos_trans_3N"/>
    <property type="match status" value="1"/>
</dbReference>
<dbReference type="Pfam" id="PF00591">
    <property type="entry name" value="Glycos_transf_3"/>
    <property type="match status" value="1"/>
</dbReference>
<dbReference type="Pfam" id="PF07831">
    <property type="entry name" value="PYNP_C"/>
    <property type="match status" value="1"/>
</dbReference>
<dbReference type="PIRSF" id="PIRSF000478">
    <property type="entry name" value="TP_PyNP"/>
    <property type="match status" value="1"/>
</dbReference>
<dbReference type="SMART" id="SM00941">
    <property type="entry name" value="PYNP_C"/>
    <property type="match status" value="1"/>
</dbReference>
<dbReference type="SUPFAM" id="SSF52418">
    <property type="entry name" value="Nucleoside phosphorylase/phosphoribosyltransferase catalytic domain"/>
    <property type="match status" value="1"/>
</dbReference>
<dbReference type="SUPFAM" id="SSF47648">
    <property type="entry name" value="Nucleoside phosphorylase/phosphoribosyltransferase N-terminal domain"/>
    <property type="match status" value="1"/>
</dbReference>
<dbReference type="SUPFAM" id="SSF54680">
    <property type="entry name" value="Pyrimidine nucleoside phosphorylase C-terminal domain"/>
    <property type="match status" value="1"/>
</dbReference>
<dbReference type="PROSITE" id="PS00647">
    <property type="entry name" value="THYMID_PHOSPHORYLASE"/>
    <property type="match status" value="1"/>
</dbReference>
<feature type="chain" id="PRO_1000069662" description="Thymidine phosphorylase">
    <location>
        <begin position="1"/>
        <end position="440"/>
    </location>
</feature>
<proteinExistence type="inferred from homology"/>
<accession>A7MGA9</accession>
<keyword id="KW-0328">Glycosyltransferase</keyword>
<keyword id="KW-1185">Reference proteome</keyword>
<keyword id="KW-0808">Transferase</keyword>
<reference key="1">
    <citation type="journal article" date="2010" name="PLoS ONE">
        <title>Genome sequence of Cronobacter sakazakii BAA-894 and comparative genomic hybridization analysis with other Cronobacter species.</title>
        <authorList>
            <person name="Kucerova E."/>
            <person name="Clifton S.W."/>
            <person name="Xia X.Q."/>
            <person name="Long F."/>
            <person name="Porwollik S."/>
            <person name="Fulton L."/>
            <person name="Fronick C."/>
            <person name="Minx P."/>
            <person name="Kyung K."/>
            <person name="Warren W."/>
            <person name="Fulton R."/>
            <person name="Feng D."/>
            <person name="Wollam A."/>
            <person name="Shah N."/>
            <person name="Bhonagiri V."/>
            <person name="Nash W.E."/>
            <person name="Hallsworth-Pepin K."/>
            <person name="Wilson R.K."/>
            <person name="McClelland M."/>
            <person name="Forsythe S.J."/>
        </authorList>
    </citation>
    <scope>NUCLEOTIDE SEQUENCE [LARGE SCALE GENOMIC DNA]</scope>
    <source>
        <strain>ATCC BAA-894</strain>
    </source>
</reference>
<organism>
    <name type="scientific">Cronobacter sakazakii (strain ATCC BAA-894)</name>
    <name type="common">Enterobacter sakazakii</name>
    <dbReference type="NCBI Taxonomy" id="290339"/>
    <lineage>
        <taxon>Bacteria</taxon>
        <taxon>Pseudomonadati</taxon>
        <taxon>Pseudomonadota</taxon>
        <taxon>Gammaproteobacteria</taxon>
        <taxon>Enterobacterales</taxon>
        <taxon>Enterobacteriaceae</taxon>
        <taxon>Cronobacter</taxon>
    </lineage>
</organism>
<gene>
    <name evidence="1" type="primary">deoA</name>
    <name type="ordered locus">ESA_03369</name>
</gene>
<evidence type="ECO:0000255" key="1">
    <source>
        <dbReference type="HAMAP-Rule" id="MF_01628"/>
    </source>
</evidence>
<protein>
    <recommendedName>
        <fullName evidence="1">Thymidine phosphorylase</fullName>
        <ecNumber evidence="1">2.4.2.4</ecNumber>
    </recommendedName>
    <alternativeName>
        <fullName evidence="1">TdRPase</fullName>
    </alternativeName>
</protein>
<comment type="function">
    <text evidence="1">The enzymes which catalyze the reversible phosphorolysis of pyrimidine nucleosides are involved in the degradation of these compounds and in their utilization as carbon and energy sources, or in the rescue of pyrimidine bases for nucleotide synthesis.</text>
</comment>
<comment type="catalytic activity">
    <reaction evidence="1">
        <text>thymidine + phosphate = 2-deoxy-alpha-D-ribose 1-phosphate + thymine</text>
        <dbReference type="Rhea" id="RHEA:16037"/>
        <dbReference type="ChEBI" id="CHEBI:17748"/>
        <dbReference type="ChEBI" id="CHEBI:17821"/>
        <dbReference type="ChEBI" id="CHEBI:43474"/>
        <dbReference type="ChEBI" id="CHEBI:57259"/>
        <dbReference type="EC" id="2.4.2.4"/>
    </reaction>
</comment>
<comment type="pathway">
    <text evidence="1">Pyrimidine metabolism; dTMP biosynthesis via salvage pathway; dTMP from thymine: step 1/2.</text>
</comment>
<comment type="subunit">
    <text evidence="1">Homodimer.</text>
</comment>
<comment type="similarity">
    <text evidence="1">Belongs to the thymidine/pyrimidine-nucleoside phosphorylase family.</text>
</comment>